<keyword id="KW-0067">ATP-binding</keyword>
<keyword id="KW-0173">Coenzyme A biosynthesis</keyword>
<keyword id="KW-0963">Cytoplasm</keyword>
<keyword id="KW-0460">Magnesium</keyword>
<keyword id="KW-0547">Nucleotide-binding</keyword>
<keyword id="KW-0548">Nucleotidyltransferase</keyword>
<keyword id="KW-0808">Transferase</keyword>
<reference key="1">
    <citation type="submission" date="2008-02" db="EMBL/GenBank/DDBJ databases">
        <title>Complete sequence of Yersinia pseudotuberculosis YPIII.</title>
        <authorList>
            <consortium name="US DOE Joint Genome Institute"/>
            <person name="Copeland A."/>
            <person name="Lucas S."/>
            <person name="Lapidus A."/>
            <person name="Glavina del Rio T."/>
            <person name="Dalin E."/>
            <person name="Tice H."/>
            <person name="Bruce D."/>
            <person name="Goodwin L."/>
            <person name="Pitluck S."/>
            <person name="Munk A.C."/>
            <person name="Brettin T."/>
            <person name="Detter J.C."/>
            <person name="Han C."/>
            <person name="Tapia R."/>
            <person name="Schmutz J."/>
            <person name="Larimer F."/>
            <person name="Land M."/>
            <person name="Hauser L."/>
            <person name="Challacombe J.F."/>
            <person name="Green L."/>
            <person name="Lindler L.E."/>
            <person name="Nikolich M.P."/>
            <person name="Richardson P."/>
        </authorList>
    </citation>
    <scope>NUCLEOTIDE SEQUENCE [LARGE SCALE GENOMIC DNA]</scope>
    <source>
        <strain>YPIII</strain>
    </source>
</reference>
<comment type="function">
    <text evidence="1">Reversibly transfers an adenylyl group from ATP to 4'-phosphopantetheine, yielding dephospho-CoA (dPCoA) and pyrophosphate.</text>
</comment>
<comment type="catalytic activity">
    <reaction evidence="1">
        <text>(R)-4'-phosphopantetheine + ATP + H(+) = 3'-dephospho-CoA + diphosphate</text>
        <dbReference type="Rhea" id="RHEA:19801"/>
        <dbReference type="ChEBI" id="CHEBI:15378"/>
        <dbReference type="ChEBI" id="CHEBI:30616"/>
        <dbReference type="ChEBI" id="CHEBI:33019"/>
        <dbReference type="ChEBI" id="CHEBI:57328"/>
        <dbReference type="ChEBI" id="CHEBI:61723"/>
        <dbReference type="EC" id="2.7.7.3"/>
    </reaction>
</comment>
<comment type="cofactor">
    <cofactor evidence="1">
        <name>Mg(2+)</name>
        <dbReference type="ChEBI" id="CHEBI:18420"/>
    </cofactor>
</comment>
<comment type="pathway">
    <text evidence="1">Cofactor biosynthesis; coenzyme A biosynthesis; CoA from (R)-pantothenate: step 4/5.</text>
</comment>
<comment type="subunit">
    <text evidence="1">Homohexamer.</text>
</comment>
<comment type="subcellular location">
    <subcellularLocation>
        <location evidence="1">Cytoplasm</location>
    </subcellularLocation>
</comment>
<comment type="similarity">
    <text evidence="1">Belongs to the bacterial CoaD family.</text>
</comment>
<feature type="chain" id="PRO_1000096864" description="Phosphopantetheine adenylyltransferase">
    <location>
        <begin position="1"/>
        <end position="159"/>
    </location>
</feature>
<feature type="binding site" evidence="1">
    <location>
        <begin position="10"/>
        <end position="11"/>
    </location>
    <ligand>
        <name>ATP</name>
        <dbReference type="ChEBI" id="CHEBI:30616"/>
    </ligand>
</feature>
<feature type="binding site" evidence="1">
    <location>
        <position position="10"/>
    </location>
    <ligand>
        <name>substrate</name>
    </ligand>
</feature>
<feature type="binding site" evidence="1">
    <location>
        <position position="18"/>
    </location>
    <ligand>
        <name>ATP</name>
        <dbReference type="ChEBI" id="CHEBI:30616"/>
    </ligand>
</feature>
<feature type="binding site" evidence="1">
    <location>
        <position position="42"/>
    </location>
    <ligand>
        <name>substrate</name>
    </ligand>
</feature>
<feature type="binding site" evidence="1">
    <location>
        <position position="74"/>
    </location>
    <ligand>
        <name>substrate</name>
    </ligand>
</feature>
<feature type="binding site" evidence="1">
    <location>
        <position position="88"/>
    </location>
    <ligand>
        <name>substrate</name>
    </ligand>
</feature>
<feature type="binding site" evidence="1">
    <location>
        <begin position="89"/>
        <end position="91"/>
    </location>
    <ligand>
        <name>ATP</name>
        <dbReference type="ChEBI" id="CHEBI:30616"/>
    </ligand>
</feature>
<feature type="binding site" evidence="1">
    <location>
        <position position="99"/>
    </location>
    <ligand>
        <name>ATP</name>
        <dbReference type="ChEBI" id="CHEBI:30616"/>
    </ligand>
</feature>
<feature type="binding site" evidence="1">
    <location>
        <begin position="124"/>
        <end position="130"/>
    </location>
    <ligand>
        <name>ATP</name>
        <dbReference type="ChEBI" id="CHEBI:30616"/>
    </ligand>
</feature>
<feature type="site" description="Transition state stabilizer" evidence="1">
    <location>
        <position position="18"/>
    </location>
</feature>
<gene>
    <name evidence="1" type="primary">coaD</name>
    <name type="ordered locus">YPK_4151</name>
</gene>
<sequence>MITKAIYPGTFDPITNGHLDLVTRASAMFSHVILAIADSSSKKPMFTLDERVALAKKVTAPLKNVEVLGFSELMAEFAKKHNANILVRGLRSVSDFEYEWQLANMNRHLMPKLESVFLMPSEKWSFISSSLVKEVARHGGDITPFLPKPVTKALLAKLA</sequence>
<proteinExistence type="inferred from homology"/>
<name>COAD_YERPY</name>
<evidence type="ECO:0000255" key="1">
    <source>
        <dbReference type="HAMAP-Rule" id="MF_00151"/>
    </source>
</evidence>
<accession>B1JQW9</accession>
<dbReference type="EC" id="2.7.7.3" evidence="1"/>
<dbReference type="EMBL" id="CP000950">
    <property type="protein sequence ID" value="ACA70410.1"/>
    <property type="molecule type" value="Genomic_DNA"/>
</dbReference>
<dbReference type="RefSeq" id="WP_012104267.1">
    <property type="nucleotide sequence ID" value="NZ_CP009792.1"/>
</dbReference>
<dbReference type="SMR" id="B1JQW9"/>
<dbReference type="GeneID" id="49787980"/>
<dbReference type="KEGG" id="ypy:YPK_4151"/>
<dbReference type="PATRIC" id="fig|502800.11.peg.502"/>
<dbReference type="UniPathway" id="UPA00241">
    <property type="reaction ID" value="UER00355"/>
</dbReference>
<dbReference type="GO" id="GO:0005737">
    <property type="term" value="C:cytoplasm"/>
    <property type="evidence" value="ECO:0007669"/>
    <property type="project" value="UniProtKB-SubCell"/>
</dbReference>
<dbReference type="GO" id="GO:0005524">
    <property type="term" value="F:ATP binding"/>
    <property type="evidence" value="ECO:0007669"/>
    <property type="project" value="UniProtKB-KW"/>
</dbReference>
<dbReference type="GO" id="GO:0004595">
    <property type="term" value="F:pantetheine-phosphate adenylyltransferase activity"/>
    <property type="evidence" value="ECO:0007669"/>
    <property type="project" value="UniProtKB-UniRule"/>
</dbReference>
<dbReference type="GO" id="GO:0015937">
    <property type="term" value="P:coenzyme A biosynthetic process"/>
    <property type="evidence" value="ECO:0007669"/>
    <property type="project" value="UniProtKB-UniRule"/>
</dbReference>
<dbReference type="CDD" id="cd02163">
    <property type="entry name" value="PPAT"/>
    <property type="match status" value="1"/>
</dbReference>
<dbReference type="FunFam" id="3.40.50.620:FF:000012">
    <property type="entry name" value="Phosphopantetheine adenylyltransferase"/>
    <property type="match status" value="1"/>
</dbReference>
<dbReference type="Gene3D" id="3.40.50.620">
    <property type="entry name" value="HUPs"/>
    <property type="match status" value="1"/>
</dbReference>
<dbReference type="HAMAP" id="MF_00151">
    <property type="entry name" value="PPAT_bact"/>
    <property type="match status" value="1"/>
</dbReference>
<dbReference type="InterPro" id="IPR004821">
    <property type="entry name" value="Cyt_trans-like"/>
</dbReference>
<dbReference type="InterPro" id="IPR001980">
    <property type="entry name" value="PPAT"/>
</dbReference>
<dbReference type="InterPro" id="IPR014729">
    <property type="entry name" value="Rossmann-like_a/b/a_fold"/>
</dbReference>
<dbReference type="NCBIfam" id="TIGR01510">
    <property type="entry name" value="coaD_prev_kdtB"/>
    <property type="match status" value="1"/>
</dbReference>
<dbReference type="NCBIfam" id="TIGR00125">
    <property type="entry name" value="cyt_tran_rel"/>
    <property type="match status" value="1"/>
</dbReference>
<dbReference type="PANTHER" id="PTHR21342">
    <property type="entry name" value="PHOSPHOPANTETHEINE ADENYLYLTRANSFERASE"/>
    <property type="match status" value="1"/>
</dbReference>
<dbReference type="PANTHER" id="PTHR21342:SF1">
    <property type="entry name" value="PHOSPHOPANTETHEINE ADENYLYLTRANSFERASE"/>
    <property type="match status" value="1"/>
</dbReference>
<dbReference type="Pfam" id="PF01467">
    <property type="entry name" value="CTP_transf_like"/>
    <property type="match status" value="1"/>
</dbReference>
<dbReference type="PRINTS" id="PR01020">
    <property type="entry name" value="LPSBIOSNTHSS"/>
</dbReference>
<dbReference type="SUPFAM" id="SSF52374">
    <property type="entry name" value="Nucleotidylyl transferase"/>
    <property type="match status" value="1"/>
</dbReference>
<organism>
    <name type="scientific">Yersinia pseudotuberculosis serotype O:3 (strain YPIII)</name>
    <dbReference type="NCBI Taxonomy" id="502800"/>
    <lineage>
        <taxon>Bacteria</taxon>
        <taxon>Pseudomonadati</taxon>
        <taxon>Pseudomonadota</taxon>
        <taxon>Gammaproteobacteria</taxon>
        <taxon>Enterobacterales</taxon>
        <taxon>Yersiniaceae</taxon>
        <taxon>Yersinia</taxon>
    </lineage>
</organism>
<protein>
    <recommendedName>
        <fullName evidence="1">Phosphopantetheine adenylyltransferase</fullName>
        <ecNumber evidence="1">2.7.7.3</ecNumber>
    </recommendedName>
    <alternativeName>
        <fullName evidence="1">Dephospho-CoA pyrophosphorylase</fullName>
    </alternativeName>
    <alternativeName>
        <fullName evidence="1">Pantetheine-phosphate adenylyltransferase</fullName>
        <shortName evidence="1">PPAT</shortName>
    </alternativeName>
</protein>